<comment type="subcellular location">
    <subcellularLocation>
        <location evidence="3">Endoplasmic reticulum membrane</location>
        <topology evidence="3">Single-pass type I membrane protein</topology>
    </subcellularLocation>
</comment>
<name>YOE2_SCHPO</name>
<protein>
    <recommendedName>
        <fullName>Uncharacterized protein P19A11.02c</fullName>
    </recommendedName>
</protein>
<proteinExistence type="inferred from homology"/>
<keyword id="KW-0256">Endoplasmic reticulum</keyword>
<keyword id="KW-0472">Membrane</keyword>
<keyword id="KW-1185">Reference proteome</keyword>
<keyword id="KW-0732">Signal</keyword>
<keyword id="KW-0812">Transmembrane</keyword>
<keyword id="KW-1133">Transmembrane helix</keyword>
<dbReference type="EMBL" id="CU329671">
    <property type="protein sequence ID" value="CAC19752.1"/>
    <property type="molecule type" value="Genomic_DNA"/>
</dbReference>
<dbReference type="RefSeq" id="NP_596170.1">
    <property type="nucleotide sequence ID" value="NM_001022090.2"/>
</dbReference>
<dbReference type="BioGRID" id="277828">
    <property type="interactions" value="7"/>
</dbReference>
<dbReference type="STRING" id="284812.Q9HDV8"/>
<dbReference type="PaxDb" id="4896-SPBP19A11.02c.1"/>
<dbReference type="EnsemblFungi" id="SPBP19A11.02c.1">
    <property type="protein sequence ID" value="SPBP19A11.02c.1:pep"/>
    <property type="gene ID" value="SPBP19A11.02c"/>
</dbReference>
<dbReference type="KEGG" id="spo:2541316"/>
<dbReference type="PomBase" id="SPBP19A11.02c"/>
<dbReference type="VEuPathDB" id="FungiDB:SPBP19A11.02c"/>
<dbReference type="HOGENOM" id="CLU_1138569_0_0_1"/>
<dbReference type="InParanoid" id="Q9HDV8"/>
<dbReference type="OMA" id="MAQTEYT"/>
<dbReference type="PRO" id="PR:Q9HDV8"/>
<dbReference type="Proteomes" id="UP000002485">
    <property type="component" value="Chromosome II"/>
</dbReference>
<dbReference type="GO" id="GO:0005789">
    <property type="term" value="C:endoplasmic reticulum membrane"/>
    <property type="evidence" value="ECO:0007669"/>
    <property type="project" value="UniProtKB-SubCell"/>
</dbReference>
<dbReference type="GO" id="GO:0009897">
    <property type="term" value="C:external side of plasma membrane"/>
    <property type="evidence" value="ECO:0000304"/>
    <property type="project" value="PomBase"/>
</dbReference>
<gene>
    <name type="ORF">SPBP19A11.02c</name>
</gene>
<evidence type="ECO:0000255" key="1"/>
<evidence type="ECO:0000256" key="2">
    <source>
        <dbReference type="SAM" id="MobiDB-lite"/>
    </source>
</evidence>
<evidence type="ECO:0000269" key="3">
    <source>
    </source>
</evidence>
<feature type="signal peptide" evidence="1">
    <location>
        <begin position="1"/>
        <end position="18"/>
    </location>
</feature>
<feature type="chain" id="PRO_0000304094" description="Uncharacterized protein P19A11.02c">
    <location>
        <begin position="19"/>
        <end position="244"/>
    </location>
</feature>
<feature type="topological domain" description="Lumenal" evidence="1">
    <location>
        <begin position="19"/>
        <end position="223"/>
    </location>
</feature>
<feature type="transmembrane region" description="Helical" evidence="1">
    <location>
        <begin position="224"/>
        <end position="244"/>
    </location>
</feature>
<feature type="region of interest" description="Disordered" evidence="2">
    <location>
        <begin position="55"/>
        <end position="128"/>
    </location>
</feature>
<feature type="compositionally biased region" description="Low complexity" evidence="2">
    <location>
        <begin position="55"/>
        <end position="65"/>
    </location>
</feature>
<feature type="compositionally biased region" description="Low complexity" evidence="2">
    <location>
        <begin position="75"/>
        <end position="128"/>
    </location>
</feature>
<sequence length="244" mass="25351">MQFSVLCKFLLLVTAVMAQTEYTPGFTTDVATTVTPTPLPSANVTTTSFSSASTETSTHSVTSTNITSIVPPPSTSHNSTTTTVPPTTSMNTTTTVPPTTSLNTTTTTAPPTTHVNSTTTVVPPTTHVNTTTVVPPTTHVNTTTVVPPTTHANTTSFVPTTTESSIHPITTGFYNTTFTTGYFNTSVTSVAVHNSTTVFPTSVPIVNTTSFNVTTIPSSAVHYASPSGLLALVVMLISAFAFLA</sequence>
<accession>Q9HDV8</accession>
<organism>
    <name type="scientific">Schizosaccharomyces pombe (strain 972 / ATCC 24843)</name>
    <name type="common">Fission yeast</name>
    <dbReference type="NCBI Taxonomy" id="284812"/>
    <lineage>
        <taxon>Eukaryota</taxon>
        <taxon>Fungi</taxon>
        <taxon>Dikarya</taxon>
        <taxon>Ascomycota</taxon>
        <taxon>Taphrinomycotina</taxon>
        <taxon>Schizosaccharomycetes</taxon>
        <taxon>Schizosaccharomycetales</taxon>
        <taxon>Schizosaccharomycetaceae</taxon>
        <taxon>Schizosaccharomyces</taxon>
    </lineage>
</organism>
<reference key="1">
    <citation type="journal article" date="2002" name="Nature">
        <title>The genome sequence of Schizosaccharomyces pombe.</title>
        <authorList>
            <person name="Wood V."/>
            <person name="Gwilliam R."/>
            <person name="Rajandream M.A."/>
            <person name="Lyne M.H."/>
            <person name="Lyne R."/>
            <person name="Stewart A."/>
            <person name="Sgouros J.G."/>
            <person name="Peat N."/>
            <person name="Hayles J."/>
            <person name="Baker S.G."/>
            <person name="Basham D."/>
            <person name="Bowman S."/>
            <person name="Brooks K."/>
            <person name="Brown D."/>
            <person name="Brown S."/>
            <person name="Chillingworth T."/>
            <person name="Churcher C.M."/>
            <person name="Collins M."/>
            <person name="Connor R."/>
            <person name="Cronin A."/>
            <person name="Davis P."/>
            <person name="Feltwell T."/>
            <person name="Fraser A."/>
            <person name="Gentles S."/>
            <person name="Goble A."/>
            <person name="Hamlin N."/>
            <person name="Harris D.E."/>
            <person name="Hidalgo J."/>
            <person name="Hodgson G."/>
            <person name="Holroyd S."/>
            <person name="Hornsby T."/>
            <person name="Howarth S."/>
            <person name="Huckle E.J."/>
            <person name="Hunt S."/>
            <person name="Jagels K."/>
            <person name="James K.D."/>
            <person name="Jones L."/>
            <person name="Jones M."/>
            <person name="Leather S."/>
            <person name="McDonald S."/>
            <person name="McLean J."/>
            <person name="Mooney P."/>
            <person name="Moule S."/>
            <person name="Mungall K.L."/>
            <person name="Murphy L.D."/>
            <person name="Niblett D."/>
            <person name="Odell C."/>
            <person name="Oliver K."/>
            <person name="O'Neil S."/>
            <person name="Pearson D."/>
            <person name="Quail M.A."/>
            <person name="Rabbinowitsch E."/>
            <person name="Rutherford K.M."/>
            <person name="Rutter S."/>
            <person name="Saunders D."/>
            <person name="Seeger K."/>
            <person name="Sharp S."/>
            <person name="Skelton J."/>
            <person name="Simmonds M.N."/>
            <person name="Squares R."/>
            <person name="Squares S."/>
            <person name="Stevens K."/>
            <person name="Taylor K."/>
            <person name="Taylor R.G."/>
            <person name="Tivey A."/>
            <person name="Walsh S.V."/>
            <person name="Warren T."/>
            <person name="Whitehead S."/>
            <person name="Woodward J.R."/>
            <person name="Volckaert G."/>
            <person name="Aert R."/>
            <person name="Robben J."/>
            <person name="Grymonprez B."/>
            <person name="Weltjens I."/>
            <person name="Vanstreels E."/>
            <person name="Rieger M."/>
            <person name="Schaefer M."/>
            <person name="Mueller-Auer S."/>
            <person name="Gabel C."/>
            <person name="Fuchs M."/>
            <person name="Duesterhoeft A."/>
            <person name="Fritzc C."/>
            <person name="Holzer E."/>
            <person name="Moestl D."/>
            <person name="Hilbert H."/>
            <person name="Borzym K."/>
            <person name="Langer I."/>
            <person name="Beck A."/>
            <person name="Lehrach H."/>
            <person name="Reinhardt R."/>
            <person name="Pohl T.M."/>
            <person name="Eger P."/>
            <person name="Zimmermann W."/>
            <person name="Wedler H."/>
            <person name="Wambutt R."/>
            <person name="Purnelle B."/>
            <person name="Goffeau A."/>
            <person name="Cadieu E."/>
            <person name="Dreano S."/>
            <person name="Gloux S."/>
            <person name="Lelaure V."/>
            <person name="Mottier S."/>
            <person name="Galibert F."/>
            <person name="Aves S.J."/>
            <person name="Xiang Z."/>
            <person name="Hunt C."/>
            <person name="Moore K."/>
            <person name="Hurst S.M."/>
            <person name="Lucas M."/>
            <person name="Rochet M."/>
            <person name="Gaillardin C."/>
            <person name="Tallada V.A."/>
            <person name="Garzon A."/>
            <person name="Thode G."/>
            <person name="Daga R.R."/>
            <person name="Cruzado L."/>
            <person name="Jimenez J."/>
            <person name="Sanchez M."/>
            <person name="del Rey F."/>
            <person name="Benito J."/>
            <person name="Dominguez A."/>
            <person name="Revuelta J.L."/>
            <person name="Moreno S."/>
            <person name="Armstrong J."/>
            <person name="Forsburg S.L."/>
            <person name="Cerutti L."/>
            <person name="Lowe T."/>
            <person name="McCombie W.R."/>
            <person name="Paulsen I."/>
            <person name="Potashkin J."/>
            <person name="Shpakovski G.V."/>
            <person name="Ussery D."/>
            <person name="Barrell B.G."/>
            <person name="Nurse P."/>
        </authorList>
    </citation>
    <scope>NUCLEOTIDE SEQUENCE [LARGE SCALE GENOMIC DNA]</scope>
    <source>
        <strain>972 / ATCC 24843</strain>
    </source>
</reference>
<reference key="2">
    <citation type="journal article" date="2006" name="Nat. Biotechnol.">
        <title>ORFeome cloning and global analysis of protein localization in the fission yeast Schizosaccharomyces pombe.</title>
        <authorList>
            <person name="Matsuyama A."/>
            <person name="Arai R."/>
            <person name="Yashiroda Y."/>
            <person name="Shirai A."/>
            <person name="Kamata A."/>
            <person name="Sekido S."/>
            <person name="Kobayashi Y."/>
            <person name="Hashimoto A."/>
            <person name="Hamamoto M."/>
            <person name="Hiraoka Y."/>
            <person name="Horinouchi S."/>
            <person name="Yoshida M."/>
        </authorList>
    </citation>
    <scope>SUBCELLULAR LOCATION [LARGE SCALE ANALYSIS]</scope>
</reference>